<dbReference type="EC" id="2.3.3.13" evidence="1"/>
<dbReference type="EMBL" id="CT971583">
    <property type="protein sequence ID" value="CAK24012.1"/>
    <property type="molecule type" value="Genomic_DNA"/>
</dbReference>
<dbReference type="SMR" id="A5GM47"/>
<dbReference type="STRING" id="32051.SynWH7803_1586"/>
<dbReference type="KEGG" id="syx:SynWH7803_1586"/>
<dbReference type="eggNOG" id="COG0119">
    <property type="taxonomic scope" value="Bacteria"/>
</dbReference>
<dbReference type="HOGENOM" id="CLU_022158_0_1_3"/>
<dbReference type="OrthoDB" id="9804858at2"/>
<dbReference type="UniPathway" id="UPA00048">
    <property type="reaction ID" value="UER00070"/>
</dbReference>
<dbReference type="Proteomes" id="UP000001566">
    <property type="component" value="Chromosome"/>
</dbReference>
<dbReference type="GO" id="GO:0005737">
    <property type="term" value="C:cytoplasm"/>
    <property type="evidence" value="ECO:0007669"/>
    <property type="project" value="UniProtKB-SubCell"/>
</dbReference>
<dbReference type="GO" id="GO:0003852">
    <property type="term" value="F:2-isopropylmalate synthase activity"/>
    <property type="evidence" value="ECO:0007669"/>
    <property type="project" value="UniProtKB-UniRule"/>
</dbReference>
<dbReference type="GO" id="GO:0003985">
    <property type="term" value="F:acetyl-CoA C-acetyltransferase activity"/>
    <property type="evidence" value="ECO:0007669"/>
    <property type="project" value="UniProtKB-UniRule"/>
</dbReference>
<dbReference type="GO" id="GO:0030145">
    <property type="term" value="F:manganese ion binding"/>
    <property type="evidence" value="ECO:0007669"/>
    <property type="project" value="UniProtKB-UniRule"/>
</dbReference>
<dbReference type="GO" id="GO:0009098">
    <property type="term" value="P:L-leucine biosynthetic process"/>
    <property type="evidence" value="ECO:0007669"/>
    <property type="project" value="UniProtKB-UniRule"/>
</dbReference>
<dbReference type="CDD" id="cd07940">
    <property type="entry name" value="DRE_TIM_IPMS"/>
    <property type="match status" value="1"/>
</dbReference>
<dbReference type="FunFam" id="1.10.238.260:FF:000001">
    <property type="entry name" value="2-isopropylmalate synthase"/>
    <property type="match status" value="1"/>
</dbReference>
<dbReference type="FunFam" id="3.20.20.70:FF:000010">
    <property type="entry name" value="2-isopropylmalate synthase"/>
    <property type="match status" value="1"/>
</dbReference>
<dbReference type="FunFam" id="3.30.160.270:FF:000001">
    <property type="entry name" value="2-isopropylmalate synthase"/>
    <property type="match status" value="1"/>
</dbReference>
<dbReference type="Gene3D" id="1.10.238.260">
    <property type="match status" value="1"/>
</dbReference>
<dbReference type="Gene3D" id="3.30.160.270">
    <property type="match status" value="1"/>
</dbReference>
<dbReference type="Gene3D" id="3.20.20.70">
    <property type="entry name" value="Aldolase class I"/>
    <property type="match status" value="1"/>
</dbReference>
<dbReference type="HAMAP" id="MF_01025">
    <property type="entry name" value="LeuA_type1"/>
    <property type="match status" value="1"/>
</dbReference>
<dbReference type="InterPro" id="IPR050073">
    <property type="entry name" value="2-IPM_HCS-like"/>
</dbReference>
<dbReference type="InterPro" id="IPR013709">
    <property type="entry name" value="2-isopropylmalate_synth_dimer"/>
</dbReference>
<dbReference type="InterPro" id="IPR002034">
    <property type="entry name" value="AIPM/Hcit_synth_CS"/>
</dbReference>
<dbReference type="InterPro" id="IPR013785">
    <property type="entry name" value="Aldolase_TIM"/>
</dbReference>
<dbReference type="InterPro" id="IPR054691">
    <property type="entry name" value="LeuA/HCS_post-cat"/>
</dbReference>
<dbReference type="InterPro" id="IPR036230">
    <property type="entry name" value="LeuA_allosteric_dom_sf"/>
</dbReference>
<dbReference type="InterPro" id="IPR005671">
    <property type="entry name" value="LeuA_bact_synth"/>
</dbReference>
<dbReference type="InterPro" id="IPR000891">
    <property type="entry name" value="PYR_CT"/>
</dbReference>
<dbReference type="NCBIfam" id="TIGR00973">
    <property type="entry name" value="leuA_bact"/>
    <property type="match status" value="1"/>
</dbReference>
<dbReference type="NCBIfam" id="NF002086">
    <property type="entry name" value="PRK00915.1-3"/>
    <property type="match status" value="1"/>
</dbReference>
<dbReference type="PANTHER" id="PTHR10277:SF9">
    <property type="entry name" value="2-ISOPROPYLMALATE SYNTHASE 1, CHLOROPLASTIC-RELATED"/>
    <property type="match status" value="1"/>
</dbReference>
<dbReference type="PANTHER" id="PTHR10277">
    <property type="entry name" value="HOMOCITRATE SYNTHASE-RELATED"/>
    <property type="match status" value="1"/>
</dbReference>
<dbReference type="Pfam" id="PF22617">
    <property type="entry name" value="HCS_D2"/>
    <property type="match status" value="1"/>
</dbReference>
<dbReference type="Pfam" id="PF00682">
    <property type="entry name" value="HMGL-like"/>
    <property type="match status" value="1"/>
</dbReference>
<dbReference type="Pfam" id="PF08502">
    <property type="entry name" value="LeuA_dimer"/>
    <property type="match status" value="1"/>
</dbReference>
<dbReference type="SMART" id="SM00917">
    <property type="entry name" value="LeuA_dimer"/>
    <property type="match status" value="1"/>
</dbReference>
<dbReference type="SUPFAM" id="SSF110921">
    <property type="entry name" value="2-isopropylmalate synthase LeuA, allosteric (dimerisation) domain"/>
    <property type="match status" value="1"/>
</dbReference>
<dbReference type="SUPFAM" id="SSF51569">
    <property type="entry name" value="Aldolase"/>
    <property type="match status" value="1"/>
</dbReference>
<dbReference type="PROSITE" id="PS00815">
    <property type="entry name" value="AIPM_HOMOCIT_SYNTH_1"/>
    <property type="match status" value="1"/>
</dbReference>
<dbReference type="PROSITE" id="PS00816">
    <property type="entry name" value="AIPM_HOMOCIT_SYNTH_2"/>
    <property type="match status" value="1"/>
</dbReference>
<dbReference type="PROSITE" id="PS50991">
    <property type="entry name" value="PYR_CT"/>
    <property type="match status" value="1"/>
</dbReference>
<comment type="function">
    <text evidence="1">Catalyzes the condensation of the acetyl group of acetyl-CoA with 3-methyl-2-oxobutanoate (2-ketoisovalerate) to form 3-carboxy-3-hydroxy-4-methylpentanoate (2-isopropylmalate).</text>
</comment>
<comment type="catalytic activity">
    <reaction evidence="1">
        <text>3-methyl-2-oxobutanoate + acetyl-CoA + H2O = (2S)-2-isopropylmalate + CoA + H(+)</text>
        <dbReference type="Rhea" id="RHEA:21524"/>
        <dbReference type="ChEBI" id="CHEBI:1178"/>
        <dbReference type="ChEBI" id="CHEBI:11851"/>
        <dbReference type="ChEBI" id="CHEBI:15377"/>
        <dbReference type="ChEBI" id="CHEBI:15378"/>
        <dbReference type="ChEBI" id="CHEBI:57287"/>
        <dbReference type="ChEBI" id="CHEBI:57288"/>
        <dbReference type="EC" id="2.3.3.13"/>
    </reaction>
</comment>
<comment type="cofactor">
    <cofactor evidence="1">
        <name>Mn(2+)</name>
        <dbReference type="ChEBI" id="CHEBI:29035"/>
    </cofactor>
</comment>
<comment type="pathway">
    <text evidence="1">Amino-acid biosynthesis; L-leucine biosynthesis; L-leucine from 3-methyl-2-oxobutanoate: step 1/4.</text>
</comment>
<comment type="subunit">
    <text evidence="1">Homodimer.</text>
</comment>
<comment type="subcellular location">
    <subcellularLocation>
        <location evidence="1">Cytoplasm</location>
    </subcellularLocation>
</comment>
<comment type="similarity">
    <text evidence="1">Belongs to the alpha-IPM synthase/homocitrate synthase family. LeuA type 1 subfamily.</text>
</comment>
<protein>
    <recommendedName>
        <fullName evidence="1">2-isopropylmalate synthase</fullName>
        <ecNumber evidence="1">2.3.3.13</ecNumber>
    </recommendedName>
    <alternativeName>
        <fullName evidence="1">Alpha-IPM synthase</fullName>
    </alternativeName>
    <alternativeName>
        <fullName evidence="1">Alpha-isopropylmalate synthase</fullName>
    </alternativeName>
</protein>
<feature type="chain" id="PRO_1000149314" description="2-isopropylmalate synthase">
    <location>
        <begin position="1"/>
        <end position="540"/>
    </location>
</feature>
<feature type="domain" description="Pyruvate carboxyltransferase" evidence="1">
    <location>
        <begin position="8"/>
        <end position="269"/>
    </location>
</feature>
<feature type="region of interest" description="Regulatory domain" evidence="1">
    <location>
        <begin position="408"/>
        <end position="540"/>
    </location>
</feature>
<feature type="binding site" evidence="1">
    <location>
        <position position="17"/>
    </location>
    <ligand>
        <name>Mn(2+)</name>
        <dbReference type="ChEBI" id="CHEBI:29035"/>
    </ligand>
</feature>
<feature type="binding site" evidence="1">
    <location>
        <position position="208"/>
    </location>
    <ligand>
        <name>Mn(2+)</name>
        <dbReference type="ChEBI" id="CHEBI:29035"/>
    </ligand>
</feature>
<feature type="binding site" evidence="1">
    <location>
        <position position="210"/>
    </location>
    <ligand>
        <name>Mn(2+)</name>
        <dbReference type="ChEBI" id="CHEBI:29035"/>
    </ligand>
</feature>
<feature type="binding site" evidence="1">
    <location>
        <position position="244"/>
    </location>
    <ligand>
        <name>Mn(2+)</name>
        <dbReference type="ChEBI" id="CHEBI:29035"/>
    </ligand>
</feature>
<accession>A5GM47</accession>
<evidence type="ECO:0000255" key="1">
    <source>
        <dbReference type="HAMAP-Rule" id="MF_01025"/>
    </source>
</evidence>
<organism>
    <name type="scientific">Synechococcus sp. (strain WH7803)</name>
    <dbReference type="NCBI Taxonomy" id="32051"/>
    <lineage>
        <taxon>Bacteria</taxon>
        <taxon>Bacillati</taxon>
        <taxon>Cyanobacteriota</taxon>
        <taxon>Cyanophyceae</taxon>
        <taxon>Synechococcales</taxon>
        <taxon>Synechococcaceae</taxon>
        <taxon>Synechococcus</taxon>
    </lineage>
</organism>
<proteinExistence type="inferred from homology"/>
<reference key="1">
    <citation type="submission" date="2006-05" db="EMBL/GenBank/DDBJ databases">
        <authorList>
            <consortium name="Genoscope"/>
        </authorList>
    </citation>
    <scope>NUCLEOTIDE SEQUENCE [LARGE SCALE GENOMIC DNA]</scope>
    <source>
        <strain>WH7803</strain>
    </source>
</reference>
<name>LEU1_SYNPW</name>
<keyword id="KW-0028">Amino-acid biosynthesis</keyword>
<keyword id="KW-0100">Branched-chain amino acid biosynthesis</keyword>
<keyword id="KW-0963">Cytoplasm</keyword>
<keyword id="KW-0432">Leucine biosynthesis</keyword>
<keyword id="KW-0464">Manganese</keyword>
<keyword id="KW-0479">Metal-binding</keyword>
<keyword id="KW-1185">Reference proteome</keyword>
<keyword id="KW-0808">Transferase</keyword>
<gene>
    <name evidence="1" type="primary">leuA</name>
    <name type="ordered locus">SynWH7803_1586</name>
</gene>
<sequence length="540" mass="57925">MAHDPGRVLIFDTTLRDGEQSPGASLNLEEKLAIAQQLARLGVDVIEAGFPFASPGDFNAVQRIAQQVGGEQGPIICGLARASRGDIKACADAVAPAPRRRIHTFIATSDIHLEHKLRKSRQEVLAIVPEMVAYARSLVDDVEFSCEDAGRSDPEFLYAVIEAAINAGASTINIPDTVGYTTPAEFGALIAGIDQHVPNISEAVLSVHGHNDLGLAVANFLEAVKNGARQLECTINGIGERAGNAALEELVMALHVRRRYFNPFFGRAEDSPTPLTGVRTEEITKTSRLVSNLTGMVVQPNKAIVGANAFAHESGIHQDGVLKNRLTYEIVDARTVGLTDNRISLGKLSGRSAVRARLEELGYDLSREDLDDAFARFKELADRKRDITDRDLEAIVSEQVQQPDARYQLKLVQVSCGSSLQPTATVTLLDEEGQEQSEAAIGTGPVDAVCRALNALAGEPNELVEFSVKSVTEGIDAMGEVTIRLRRDGQLFSGHAADTDVVVAAAQAFVNALNRLVAGSLNPTLHPQRDATPLDASPTL</sequence>